<name>SYA_XYLFT</name>
<keyword id="KW-0030">Aminoacyl-tRNA synthetase</keyword>
<keyword id="KW-0067">ATP-binding</keyword>
<keyword id="KW-0963">Cytoplasm</keyword>
<keyword id="KW-0436">Ligase</keyword>
<keyword id="KW-0479">Metal-binding</keyword>
<keyword id="KW-0547">Nucleotide-binding</keyword>
<keyword id="KW-0648">Protein biosynthesis</keyword>
<keyword id="KW-1185">Reference proteome</keyword>
<keyword id="KW-0694">RNA-binding</keyword>
<keyword id="KW-0820">tRNA-binding</keyword>
<keyword id="KW-0862">Zinc</keyword>
<proteinExistence type="inferred from homology"/>
<evidence type="ECO:0000255" key="1">
    <source>
        <dbReference type="HAMAP-Rule" id="MF_00036"/>
    </source>
</evidence>
<gene>
    <name evidence="1" type="primary">alaS</name>
    <name type="ordered locus">PD_0094</name>
</gene>
<sequence>MNIPTKFTTSKIRSDFLEFFKNKGHKIVPSAPLVPSNDPTLLFTNSGMVQFKDVFLGAEKRSEVRVADVQCCLRAGGKHNDLDSVGYTARHHTFFEMLGNWSFGDYFKKEAIMWAWELLTQVWELPPERLLVTVYHTDDESYALWRDMVGVPEDRIVRIGDNKGAPFASDNFWQMADTGPCGPCTEIFYDHGEHIPGGPPGSPGEDGDRFIEIWNLVFMQFDRQSDGTLVPLPTPCVDTGMGLERLAAILQHVHTNYEIDLFQTLILKAAELTAVADVQNKSLCVIADHSRACAFLIVDGVLPSNEGRGYVLRRIIRRALRHGWMLGVRQPFFNNMVPTLIAVMGDAYPKLQAAAESVMRTLLAEEERFAETLDVGMKIFNEVAAKVANGVIPGSDAFRLYDTYGFPVDLTADIARERGMRVDMAGFEAAMTQQRKTARAAGKFGRGVQLSAERAATLSPTVFLGYEQLQADDLRVVALLSDGGLTDSASVGDEVIVLTDRTPFYAESGGQVGDIGTLMASDGVRLEVTDTQKLMGQFHGHVARIVQGGVKVGDVLSGSVAVARRKMVALNHSATHLLHCALRSVFGTHVVQKGSLVAPDRLRFDFSHFEPISAAQMTLIERMVNDEVRANHLVMIEQMGMQAALDAGAMALFGEKYGEHVRVVTMGTSVELCGGTHITRTGDIGLFKIISECGVSSGVRRIEAVTGESALNHVLAEEHRLYEVAGLIGSNANNVVNHIRQLTDRQKTLERELEKLKGKLISGTITDLLSMAVNVADVKVVAARLDGLDGKALREALDRLKLQLSDAVIVLAGVTGGKVALVTAVNGPRAMGKVKADTLLSHVATQINGRGGGRVDFAQGGGEDGPSLRSALDGVATWVKQHLN</sequence>
<reference key="1">
    <citation type="journal article" date="2003" name="J. Bacteriol.">
        <title>Comparative analyses of the complete genome sequences of Pierce's disease and citrus variegated chlorosis strains of Xylella fastidiosa.</title>
        <authorList>
            <person name="Van Sluys M.A."/>
            <person name="de Oliveira M.C."/>
            <person name="Monteiro-Vitorello C.B."/>
            <person name="Miyaki C.Y."/>
            <person name="Furlan L.R."/>
            <person name="Camargo L.E.A."/>
            <person name="da Silva A.C.R."/>
            <person name="Moon D.H."/>
            <person name="Takita M.A."/>
            <person name="Lemos E.G.M."/>
            <person name="Machado M.A."/>
            <person name="Ferro M.I.T."/>
            <person name="da Silva F.R."/>
            <person name="Goldman M.H.S."/>
            <person name="Goldman G.H."/>
            <person name="Lemos M.V.F."/>
            <person name="El-Dorry H."/>
            <person name="Tsai S.M."/>
            <person name="Carrer H."/>
            <person name="Carraro D.M."/>
            <person name="de Oliveira R.C."/>
            <person name="Nunes L.R."/>
            <person name="Siqueira W.J."/>
            <person name="Coutinho L.L."/>
            <person name="Kimura E.T."/>
            <person name="Ferro E.S."/>
            <person name="Harakava R."/>
            <person name="Kuramae E.E."/>
            <person name="Marino C.L."/>
            <person name="Giglioti E."/>
            <person name="Abreu I.L."/>
            <person name="Alves L.M.C."/>
            <person name="do Amaral A.M."/>
            <person name="Baia G.S."/>
            <person name="Blanco S.R."/>
            <person name="Brito M.S."/>
            <person name="Cannavan F.S."/>
            <person name="Celestino A.V."/>
            <person name="da Cunha A.F."/>
            <person name="Fenille R.C."/>
            <person name="Ferro J.A."/>
            <person name="Formighieri E.F."/>
            <person name="Kishi L.T."/>
            <person name="Leoni S.G."/>
            <person name="Oliveira A.R."/>
            <person name="Rosa V.E. Jr."/>
            <person name="Sassaki F.T."/>
            <person name="Sena J.A.D."/>
            <person name="de Souza A.A."/>
            <person name="Truffi D."/>
            <person name="Tsukumo F."/>
            <person name="Yanai G.M."/>
            <person name="Zaros L.G."/>
            <person name="Civerolo E.L."/>
            <person name="Simpson A.J.G."/>
            <person name="Almeida N.F. Jr."/>
            <person name="Setubal J.C."/>
            <person name="Kitajima J.P."/>
        </authorList>
    </citation>
    <scope>NUCLEOTIDE SEQUENCE [LARGE SCALE GENOMIC DNA]</scope>
    <source>
        <strain>Temecula1 / ATCC 700964</strain>
    </source>
</reference>
<organism>
    <name type="scientific">Xylella fastidiosa (strain Temecula1 / ATCC 700964)</name>
    <dbReference type="NCBI Taxonomy" id="183190"/>
    <lineage>
        <taxon>Bacteria</taxon>
        <taxon>Pseudomonadati</taxon>
        <taxon>Pseudomonadota</taxon>
        <taxon>Gammaproteobacteria</taxon>
        <taxon>Lysobacterales</taxon>
        <taxon>Lysobacteraceae</taxon>
        <taxon>Xylella</taxon>
    </lineage>
</organism>
<feature type="chain" id="PRO_0000075255" description="Alanine--tRNA ligase">
    <location>
        <begin position="1"/>
        <end position="884"/>
    </location>
</feature>
<feature type="binding site" evidence="1">
    <location>
        <position position="572"/>
    </location>
    <ligand>
        <name>Zn(2+)</name>
        <dbReference type="ChEBI" id="CHEBI:29105"/>
    </ligand>
</feature>
<feature type="binding site" evidence="1">
    <location>
        <position position="576"/>
    </location>
    <ligand>
        <name>Zn(2+)</name>
        <dbReference type="ChEBI" id="CHEBI:29105"/>
    </ligand>
</feature>
<feature type="binding site" evidence="1">
    <location>
        <position position="673"/>
    </location>
    <ligand>
        <name>Zn(2+)</name>
        <dbReference type="ChEBI" id="CHEBI:29105"/>
    </ligand>
</feature>
<feature type="binding site" evidence="1">
    <location>
        <position position="677"/>
    </location>
    <ligand>
        <name>Zn(2+)</name>
        <dbReference type="ChEBI" id="CHEBI:29105"/>
    </ligand>
</feature>
<dbReference type="EC" id="6.1.1.7" evidence="1"/>
<dbReference type="EMBL" id="AE009442">
    <property type="protein sequence ID" value="AAO27994.1"/>
    <property type="molecule type" value="Genomic_DNA"/>
</dbReference>
<dbReference type="RefSeq" id="WP_004087615.1">
    <property type="nucleotide sequence ID" value="NC_004556.1"/>
</dbReference>
<dbReference type="SMR" id="Q87F43"/>
<dbReference type="GeneID" id="93903785"/>
<dbReference type="KEGG" id="xft:PD_0094"/>
<dbReference type="HOGENOM" id="CLU_004485_1_1_6"/>
<dbReference type="Proteomes" id="UP000002516">
    <property type="component" value="Chromosome"/>
</dbReference>
<dbReference type="GO" id="GO:0005829">
    <property type="term" value="C:cytosol"/>
    <property type="evidence" value="ECO:0007669"/>
    <property type="project" value="TreeGrafter"/>
</dbReference>
<dbReference type="GO" id="GO:0004813">
    <property type="term" value="F:alanine-tRNA ligase activity"/>
    <property type="evidence" value="ECO:0007669"/>
    <property type="project" value="UniProtKB-UniRule"/>
</dbReference>
<dbReference type="GO" id="GO:0002161">
    <property type="term" value="F:aminoacyl-tRNA deacylase activity"/>
    <property type="evidence" value="ECO:0007669"/>
    <property type="project" value="TreeGrafter"/>
</dbReference>
<dbReference type="GO" id="GO:0005524">
    <property type="term" value="F:ATP binding"/>
    <property type="evidence" value="ECO:0007669"/>
    <property type="project" value="UniProtKB-UniRule"/>
</dbReference>
<dbReference type="GO" id="GO:0000049">
    <property type="term" value="F:tRNA binding"/>
    <property type="evidence" value="ECO:0007669"/>
    <property type="project" value="UniProtKB-KW"/>
</dbReference>
<dbReference type="GO" id="GO:0008270">
    <property type="term" value="F:zinc ion binding"/>
    <property type="evidence" value="ECO:0007669"/>
    <property type="project" value="UniProtKB-UniRule"/>
</dbReference>
<dbReference type="GO" id="GO:0006419">
    <property type="term" value="P:alanyl-tRNA aminoacylation"/>
    <property type="evidence" value="ECO:0007669"/>
    <property type="project" value="UniProtKB-UniRule"/>
</dbReference>
<dbReference type="GO" id="GO:0045892">
    <property type="term" value="P:negative regulation of DNA-templated transcription"/>
    <property type="evidence" value="ECO:0007669"/>
    <property type="project" value="TreeGrafter"/>
</dbReference>
<dbReference type="CDD" id="cd00673">
    <property type="entry name" value="AlaRS_core"/>
    <property type="match status" value="1"/>
</dbReference>
<dbReference type="FunFam" id="3.10.310.40:FF:000001">
    <property type="entry name" value="Alanine--tRNA ligase"/>
    <property type="match status" value="1"/>
</dbReference>
<dbReference type="FunFam" id="3.30.54.20:FF:000001">
    <property type="entry name" value="Alanine--tRNA ligase"/>
    <property type="match status" value="1"/>
</dbReference>
<dbReference type="FunFam" id="3.30.930.10:FF:000004">
    <property type="entry name" value="Alanine--tRNA ligase"/>
    <property type="match status" value="1"/>
</dbReference>
<dbReference type="FunFam" id="3.30.980.10:FF:000004">
    <property type="entry name" value="Alanine--tRNA ligase, cytoplasmic"/>
    <property type="match status" value="1"/>
</dbReference>
<dbReference type="Gene3D" id="2.40.30.130">
    <property type="match status" value="1"/>
</dbReference>
<dbReference type="Gene3D" id="3.10.310.40">
    <property type="match status" value="1"/>
</dbReference>
<dbReference type="Gene3D" id="3.30.54.20">
    <property type="match status" value="1"/>
</dbReference>
<dbReference type="Gene3D" id="6.10.250.550">
    <property type="match status" value="1"/>
</dbReference>
<dbReference type="Gene3D" id="3.30.930.10">
    <property type="entry name" value="Bira Bifunctional Protein, Domain 2"/>
    <property type="match status" value="1"/>
</dbReference>
<dbReference type="Gene3D" id="3.30.980.10">
    <property type="entry name" value="Threonyl-trna Synthetase, Chain A, domain 2"/>
    <property type="match status" value="1"/>
</dbReference>
<dbReference type="HAMAP" id="MF_00036_B">
    <property type="entry name" value="Ala_tRNA_synth_B"/>
    <property type="match status" value="1"/>
</dbReference>
<dbReference type="InterPro" id="IPR045864">
    <property type="entry name" value="aa-tRNA-synth_II/BPL/LPL"/>
</dbReference>
<dbReference type="InterPro" id="IPR002318">
    <property type="entry name" value="Ala-tRNA-lgiase_IIc"/>
</dbReference>
<dbReference type="InterPro" id="IPR018162">
    <property type="entry name" value="Ala-tRNA-ligase_IIc_anticod-bd"/>
</dbReference>
<dbReference type="InterPro" id="IPR018165">
    <property type="entry name" value="Ala-tRNA-synth_IIc_core"/>
</dbReference>
<dbReference type="InterPro" id="IPR018164">
    <property type="entry name" value="Ala-tRNA-synth_IIc_N"/>
</dbReference>
<dbReference type="InterPro" id="IPR050058">
    <property type="entry name" value="Ala-tRNA_ligase"/>
</dbReference>
<dbReference type="InterPro" id="IPR023033">
    <property type="entry name" value="Ala_tRNA_ligase_euk/bac"/>
</dbReference>
<dbReference type="InterPro" id="IPR003156">
    <property type="entry name" value="DHHA1_dom"/>
</dbReference>
<dbReference type="InterPro" id="IPR018163">
    <property type="entry name" value="Thr/Ala-tRNA-synth_IIc_edit"/>
</dbReference>
<dbReference type="InterPro" id="IPR009000">
    <property type="entry name" value="Transl_B-barrel_sf"/>
</dbReference>
<dbReference type="InterPro" id="IPR012947">
    <property type="entry name" value="tRNA_SAD"/>
</dbReference>
<dbReference type="NCBIfam" id="TIGR00344">
    <property type="entry name" value="alaS"/>
    <property type="match status" value="1"/>
</dbReference>
<dbReference type="PANTHER" id="PTHR11777:SF9">
    <property type="entry name" value="ALANINE--TRNA LIGASE, CYTOPLASMIC"/>
    <property type="match status" value="1"/>
</dbReference>
<dbReference type="PANTHER" id="PTHR11777">
    <property type="entry name" value="ALANYL-TRNA SYNTHETASE"/>
    <property type="match status" value="1"/>
</dbReference>
<dbReference type="Pfam" id="PF02272">
    <property type="entry name" value="DHHA1"/>
    <property type="match status" value="1"/>
</dbReference>
<dbReference type="Pfam" id="PF01411">
    <property type="entry name" value="tRNA-synt_2c"/>
    <property type="match status" value="1"/>
</dbReference>
<dbReference type="Pfam" id="PF07973">
    <property type="entry name" value="tRNA_SAD"/>
    <property type="match status" value="1"/>
</dbReference>
<dbReference type="PRINTS" id="PR00980">
    <property type="entry name" value="TRNASYNTHALA"/>
</dbReference>
<dbReference type="SMART" id="SM00863">
    <property type="entry name" value="tRNA_SAD"/>
    <property type="match status" value="1"/>
</dbReference>
<dbReference type="SUPFAM" id="SSF55681">
    <property type="entry name" value="Class II aaRS and biotin synthetases"/>
    <property type="match status" value="1"/>
</dbReference>
<dbReference type="SUPFAM" id="SSF101353">
    <property type="entry name" value="Putative anticodon-binding domain of alanyl-tRNA synthetase (AlaRS)"/>
    <property type="match status" value="1"/>
</dbReference>
<dbReference type="SUPFAM" id="SSF55186">
    <property type="entry name" value="ThrRS/AlaRS common domain"/>
    <property type="match status" value="1"/>
</dbReference>
<dbReference type="SUPFAM" id="SSF50447">
    <property type="entry name" value="Translation proteins"/>
    <property type="match status" value="1"/>
</dbReference>
<dbReference type="PROSITE" id="PS50860">
    <property type="entry name" value="AA_TRNA_LIGASE_II_ALA"/>
    <property type="match status" value="1"/>
</dbReference>
<accession>Q87F43</accession>
<comment type="function">
    <text evidence="1">Catalyzes the attachment of alanine to tRNA(Ala) in a two-step reaction: alanine is first activated by ATP to form Ala-AMP and then transferred to the acceptor end of tRNA(Ala). Also edits incorrectly charged Ser-tRNA(Ala) and Gly-tRNA(Ala) via its editing domain.</text>
</comment>
<comment type="catalytic activity">
    <reaction evidence="1">
        <text>tRNA(Ala) + L-alanine + ATP = L-alanyl-tRNA(Ala) + AMP + diphosphate</text>
        <dbReference type="Rhea" id="RHEA:12540"/>
        <dbReference type="Rhea" id="RHEA-COMP:9657"/>
        <dbReference type="Rhea" id="RHEA-COMP:9923"/>
        <dbReference type="ChEBI" id="CHEBI:30616"/>
        <dbReference type="ChEBI" id="CHEBI:33019"/>
        <dbReference type="ChEBI" id="CHEBI:57972"/>
        <dbReference type="ChEBI" id="CHEBI:78442"/>
        <dbReference type="ChEBI" id="CHEBI:78497"/>
        <dbReference type="ChEBI" id="CHEBI:456215"/>
        <dbReference type="EC" id="6.1.1.7"/>
    </reaction>
</comment>
<comment type="cofactor">
    <cofactor evidence="1">
        <name>Zn(2+)</name>
        <dbReference type="ChEBI" id="CHEBI:29105"/>
    </cofactor>
    <text evidence="1">Binds 1 zinc ion per subunit.</text>
</comment>
<comment type="subcellular location">
    <subcellularLocation>
        <location evidence="1">Cytoplasm</location>
    </subcellularLocation>
</comment>
<comment type="domain">
    <text evidence="1">Consists of three domains; the N-terminal catalytic domain, the editing domain and the C-terminal C-Ala domain. The editing domain removes incorrectly charged amino acids, while the C-Ala domain, along with tRNA(Ala), serves as a bridge to cooperatively bring together the editing and aminoacylation centers thus stimulating deacylation of misacylated tRNAs.</text>
</comment>
<comment type="similarity">
    <text evidence="1">Belongs to the class-II aminoacyl-tRNA synthetase family.</text>
</comment>
<protein>
    <recommendedName>
        <fullName evidence="1">Alanine--tRNA ligase</fullName>
        <ecNumber evidence="1">6.1.1.7</ecNumber>
    </recommendedName>
    <alternativeName>
        <fullName evidence="1">Alanyl-tRNA synthetase</fullName>
        <shortName evidence="1">AlaRS</shortName>
    </alternativeName>
</protein>